<keyword id="KW-0150">Chloroplast</keyword>
<keyword id="KW-0934">Plastid</keyword>
<keyword id="KW-1185">Reference proteome</keyword>
<keyword id="KW-0677">Repeat</keyword>
<keyword id="KW-0809">Transit peptide</keyword>
<proteinExistence type="evidence at protein level"/>
<dbReference type="EMBL" id="HM157284">
    <property type="protein sequence ID" value="ADK35876.1"/>
    <property type="molecule type" value="mRNA"/>
</dbReference>
<dbReference type="EMBL" id="AC013453">
    <property type="protein sequence ID" value="AAF71977.1"/>
    <property type="molecule type" value="Genomic_DNA"/>
</dbReference>
<dbReference type="EMBL" id="CP002684">
    <property type="protein sequence ID" value="AEE29331.1"/>
    <property type="molecule type" value="Genomic_DNA"/>
</dbReference>
<dbReference type="PIR" id="H86288">
    <property type="entry name" value="H86288"/>
</dbReference>
<dbReference type="RefSeq" id="NP_173004.1">
    <property type="nucleotide sequence ID" value="NM_101420.2"/>
</dbReference>
<dbReference type="SMR" id="Q9M9E2"/>
<dbReference type="FunCoup" id="Q9M9E2">
    <property type="interactions" value="119"/>
</dbReference>
<dbReference type="STRING" id="3702.Q9M9E2"/>
<dbReference type="PaxDb" id="3702-AT1G15510.1"/>
<dbReference type="ProteomicsDB" id="226405"/>
<dbReference type="EnsemblPlants" id="AT1G15510.1">
    <property type="protein sequence ID" value="AT1G15510.1"/>
    <property type="gene ID" value="AT1G15510"/>
</dbReference>
<dbReference type="GeneID" id="838121"/>
<dbReference type="Gramene" id="AT1G15510.1">
    <property type="protein sequence ID" value="AT1G15510.1"/>
    <property type="gene ID" value="AT1G15510"/>
</dbReference>
<dbReference type="KEGG" id="ath:AT1G15510"/>
<dbReference type="Araport" id="AT1G15510"/>
<dbReference type="TAIR" id="AT1G15510">
    <property type="gene designation" value="ECB2"/>
</dbReference>
<dbReference type="eggNOG" id="KOG4197">
    <property type="taxonomic scope" value="Eukaryota"/>
</dbReference>
<dbReference type="HOGENOM" id="CLU_002706_15_1_1"/>
<dbReference type="InParanoid" id="Q9M9E2"/>
<dbReference type="OMA" id="INNRCFE"/>
<dbReference type="PhylomeDB" id="Q9M9E2"/>
<dbReference type="PRO" id="PR:Q9M9E2"/>
<dbReference type="Proteomes" id="UP000006548">
    <property type="component" value="Chromosome 1"/>
</dbReference>
<dbReference type="ExpressionAtlas" id="Q9M9E2">
    <property type="expression patterns" value="baseline and differential"/>
</dbReference>
<dbReference type="GO" id="GO:0009507">
    <property type="term" value="C:chloroplast"/>
    <property type="evidence" value="ECO:0000314"/>
    <property type="project" value="TAIR"/>
</dbReference>
<dbReference type="GO" id="GO:0003723">
    <property type="term" value="F:RNA binding"/>
    <property type="evidence" value="ECO:0007669"/>
    <property type="project" value="InterPro"/>
</dbReference>
<dbReference type="GO" id="GO:0008270">
    <property type="term" value="F:zinc ion binding"/>
    <property type="evidence" value="ECO:0007669"/>
    <property type="project" value="InterPro"/>
</dbReference>
<dbReference type="GO" id="GO:0009658">
    <property type="term" value="P:chloroplast organization"/>
    <property type="evidence" value="ECO:0000315"/>
    <property type="project" value="TAIR"/>
</dbReference>
<dbReference type="GO" id="GO:0009416">
    <property type="term" value="P:response to light stimulus"/>
    <property type="evidence" value="ECO:0000270"/>
    <property type="project" value="TAIR"/>
</dbReference>
<dbReference type="GO" id="GO:0009451">
    <property type="term" value="P:RNA modification"/>
    <property type="evidence" value="ECO:0000315"/>
    <property type="project" value="TAIR"/>
</dbReference>
<dbReference type="FunFam" id="1.25.40.10:FF:002591">
    <property type="entry name" value="Pentatricopeptide repeat-containing protein At1g15510, chloroplastic"/>
    <property type="match status" value="1"/>
</dbReference>
<dbReference type="FunFam" id="1.25.40.10:FF:000776">
    <property type="entry name" value="Pentatricopeptide repeat-containing protein At3g13880"/>
    <property type="match status" value="1"/>
</dbReference>
<dbReference type="FunFam" id="1.25.40.10:FF:000073">
    <property type="entry name" value="Pentatricopeptide repeat-containing protein chloroplastic"/>
    <property type="match status" value="1"/>
</dbReference>
<dbReference type="FunFam" id="1.25.40.10:FF:000395">
    <property type="entry name" value="Pentatricopeptide repeat-containing protein chloroplastic"/>
    <property type="match status" value="1"/>
</dbReference>
<dbReference type="FunFam" id="1.25.40.10:FF:000851">
    <property type="entry name" value="Pentatricopeptide repeat-containing protein103"/>
    <property type="match status" value="1"/>
</dbReference>
<dbReference type="Gene3D" id="1.25.40.10">
    <property type="entry name" value="Tetratricopeptide repeat domain"/>
    <property type="match status" value="6"/>
</dbReference>
<dbReference type="InterPro" id="IPR032867">
    <property type="entry name" value="DYW_dom"/>
</dbReference>
<dbReference type="InterPro" id="IPR046848">
    <property type="entry name" value="E_motif"/>
</dbReference>
<dbReference type="InterPro" id="IPR002885">
    <property type="entry name" value="Pentatricopeptide_rpt"/>
</dbReference>
<dbReference type="InterPro" id="IPR046960">
    <property type="entry name" value="PPR_At4g14850-like_plant"/>
</dbReference>
<dbReference type="InterPro" id="IPR011990">
    <property type="entry name" value="TPR-like_helical_dom_sf"/>
</dbReference>
<dbReference type="NCBIfam" id="TIGR00756">
    <property type="entry name" value="PPR"/>
    <property type="match status" value="8"/>
</dbReference>
<dbReference type="PANTHER" id="PTHR47926">
    <property type="entry name" value="PENTATRICOPEPTIDE REPEAT-CONTAINING PROTEIN"/>
    <property type="match status" value="1"/>
</dbReference>
<dbReference type="PANTHER" id="PTHR47926:SF440">
    <property type="entry name" value="REPEAT-CONTAINING PROTEIN, PUTATIVE-RELATED"/>
    <property type="match status" value="1"/>
</dbReference>
<dbReference type="Pfam" id="PF14432">
    <property type="entry name" value="DYW_deaminase"/>
    <property type="match status" value="1"/>
</dbReference>
<dbReference type="Pfam" id="PF20431">
    <property type="entry name" value="E_motif"/>
    <property type="match status" value="1"/>
</dbReference>
<dbReference type="Pfam" id="PF01535">
    <property type="entry name" value="PPR"/>
    <property type="match status" value="3"/>
</dbReference>
<dbReference type="Pfam" id="PF13041">
    <property type="entry name" value="PPR_2"/>
    <property type="match status" value="4"/>
</dbReference>
<dbReference type="PROSITE" id="PS51375">
    <property type="entry name" value="PPR"/>
    <property type="match status" value="16"/>
</dbReference>
<reference key="1">
    <citation type="journal article" date="2010" name="Plant Mol. Biol.">
        <title>Editing of accD and ndhF chloroplast transcripts is partially affected in the Arabidopsis vanilla cream1 mutant.</title>
        <authorList>
            <person name="Tseng C.C."/>
            <person name="Sung T.Y."/>
            <person name="Li Y.C."/>
            <person name="Hsu S.J."/>
            <person name="Lin C.L."/>
            <person name="Hsieh M.H."/>
        </authorList>
    </citation>
    <scope>NUCLEOTIDE SEQUENCE [MRNA]</scope>
    <scope>FUNCTION</scope>
</reference>
<reference key="2">
    <citation type="journal article" date="2000" name="Nature">
        <title>Sequence and analysis of chromosome 1 of the plant Arabidopsis thaliana.</title>
        <authorList>
            <person name="Theologis A."/>
            <person name="Ecker J.R."/>
            <person name="Palm C.J."/>
            <person name="Federspiel N.A."/>
            <person name="Kaul S."/>
            <person name="White O."/>
            <person name="Alonso J."/>
            <person name="Altafi H."/>
            <person name="Araujo R."/>
            <person name="Bowman C.L."/>
            <person name="Brooks S.Y."/>
            <person name="Buehler E."/>
            <person name="Chan A."/>
            <person name="Chao Q."/>
            <person name="Chen H."/>
            <person name="Cheuk R.F."/>
            <person name="Chin C.W."/>
            <person name="Chung M.K."/>
            <person name="Conn L."/>
            <person name="Conway A.B."/>
            <person name="Conway A.R."/>
            <person name="Creasy T.H."/>
            <person name="Dewar K."/>
            <person name="Dunn P."/>
            <person name="Etgu P."/>
            <person name="Feldblyum T.V."/>
            <person name="Feng J.-D."/>
            <person name="Fong B."/>
            <person name="Fujii C.Y."/>
            <person name="Gill J.E."/>
            <person name="Goldsmith A.D."/>
            <person name="Haas B."/>
            <person name="Hansen N.F."/>
            <person name="Hughes B."/>
            <person name="Huizar L."/>
            <person name="Hunter J.L."/>
            <person name="Jenkins J."/>
            <person name="Johnson-Hopson C."/>
            <person name="Khan S."/>
            <person name="Khaykin E."/>
            <person name="Kim C.J."/>
            <person name="Koo H.L."/>
            <person name="Kremenetskaia I."/>
            <person name="Kurtz D.B."/>
            <person name="Kwan A."/>
            <person name="Lam B."/>
            <person name="Langin-Hooper S."/>
            <person name="Lee A."/>
            <person name="Lee J.M."/>
            <person name="Lenz C.A."/>
            <person name="Li J.H."/>
            <person name="Li Y.-P."/>
            <person name="Lin X."/>
            <person name="Liu S.X."/>
            <person name="Liu Z.A."/>
            <person name="Luros J.S."/>
            <person name="Maiti R."/>
            <person name="Marziali A."/>
            <person name="Militscher J."/>
            <person name="Miranda M."/>
            <person name="Nguyen M."/>
            <person name="Nierman W.C."/>
            <person name="Osborne B.I."/>
            <person name="Pai G."/>
            <person name="Peterson J."/>
            <person name="Pham P.K."/>
            <person name="Rizzo M."/>
            <person name="Rooney T."/>
            <person name="Rowley D."/>
            <person name="Sakano H."/>
            <person name="Salzberg S.L."/>
            <person name="Schwartz J.R."/>
            <person name="Shinn P."/>
            <person name="Southwick A.M."/>
            <person name="Sun H."/>
            <person name="Tallon L.J."/>
            <person name="Tambunga G."/>
            <person name="Toriumi M.J."/>
            <person name="Town C.D."/>
            <person name="Utterback T."/>
            <person name="Van Aken S."/>
            <person name="Vaysberg M."/>
            <person name="Vysotskaia V.S."/>
            <person name="Walker M."/>
            <person name="Wu D."/>
            <person name="Yu G."/>
            <person name="Fraser C.M."/>
            <person name="Venter J.C."/>
            <person name="Davis R.W."/>
        </authorList>
    </citation>
    <scope>NUCLEOTIDE SEQUENCE [LARGE SCALE GENOMIC DNA]</scope>
    <source>
        <strain>cv. Columbia</strain>
    </source>
</reference>
<reference key="3">
    <citation type="journal article" date="2017" name="Plant J.">
        <title>Araport11: a complete reannotation of the Arabidopsis thaliana reference genome.</title>
        <authorList>
            <person name="Cheng C.Y."/>
            <person name="Krishnakumar V."/>
            <person name="Chan A.P."/>
            <person name="Thibaud-Nissen F."/>
            <person name="Schobel S."/>
            <person name="Town C.D."/>
        </authorList>
    </citation>
    <scope>GENOME REANNOTATION</scope>
    <source>
        <strain>cv. Columbia</strain>
    </source>
</reference>
<reference key="4">
    <citation type="journal article" date="2004" name="Plant Cell">
        <title>Genome-wide analysis of Arabidopsis pentatricopeptide repeat proteins reveals their essential role in organelle biogenesis.</title>
        <authorList>
            <person name="Lurin C."/>
            <person name="Andres C."/>
            <person name="Aubourg S."/>
            <person name="Bellaoui M."/>
            <person name="Bitton F."/>
            <person name="Bruyere C."/>
            <person name="Caboche M."/>
            <person name="Debast C."/>
            <person name="Gualberto J."/>
            <person name="Hoffmann B."/>
            <person name="Lecharny A."/>
            <person name="Le Ret M."/>
            <person name="Martin-Magniette M.-L."/>
            <person name="Mireau H."/>
            <person name="Peeters N."/>
            <person name="Renou J.-P."/>
            <person name="Szurek B."/>
            <person name="Taconnat L."/>
            <person name="Small I."/>
        </authorList>
    </citation>
    <scope>GENE FAMILY</scope>
</reference>
<reference key="5">
    <citation type="journal article" date="2009" name="Plant J.">
        <title>AtECB2, a pentatricopeptide repeat protein, is required for chloroplast transcript accD RNA editing and early chloroplast biogenesis in Arabidopsis thaliana.</title>
        <authorList>
            <person name="Yu Q.B."/>
            <person name="Jiang Y."/>
            <person name="Chong K."/>
            <person name="Yang Z.N."/>
        </authorList>
    </citation>
    <scope>FUNCTION</scope>
    <scope>DISRUPTION PHENOTYPE</scope>
</reference>
<reference key="6">
    <citation type="journal article" date="2011" name="J. Integr. Plant Biol.">
        <title>A point mutation in the pentatricopeptide repeat motif of the AtECB2 protein causes delayed chloroplast development.</title>
        <authorList>
            <person name="Cao Z.L."/>
            <person name="Yu Q.B."/>
            <person name="Sun Y."/>
            <person name="Lu Y."/>
            <person name="Cui Y.L."/>
            <person name="Yang Z.N."/>
        </authorList>
    </citation>
    <scope>FUNCTION</scope>
    <scope>MUTAGENESIS OF THR-500</scope>
</reference>
<gene>
    <name type="primary">PCMP-H73</name>
    <name evidence="5" type="synonym">ECB2</name>
    <name evidence="6" type="synonym">VAC1</name>
    <name type="ordered locus">At1g15510</name>
    <name type="ORF">T16N11.2</name>
</gene>
<accession>Q9M9E2</accession>
<accession>E2FJQ9</accession>
<feature type="transit peptide" description="Chloroplast" evidence="1">
    <location>
        <begin position="1"/>
        <end position="52"/>
    </location>
</feature>
<feature type="chain" id="PRO_0000342786" description="Pentatricopeptide repeat-containing protein At1g15510, chloroplastic">
    <location>
        <begin position="53"/>
        <end position="866"/>
    </location>
</feature>
<feature type="repeat" description="PPR 1">
    <location>
        <begin position="58"/>
        <end position="92"/>
    </location>
</feature>
<feature type="repeat" description="PPR 2">
    <location>
        <begin position="93"/>
        <end position="123"/>
    </location>
</feature>
<feature type="repeat" description="PPR 3">
    <location>
        <begin position="128"/>
        <end position="158"/>
    </location>
</feature>
<feature type="repeat" description="PPR 4">
    <location>
        <begin position="159"/>
        <end position="194"/>
    </location>
</feature>
<feature type="repeat" description="PPR 5">
    <location>
        <begin position="195"/>
        <end position="229"/>
    </location>
</feature>
<feature type="repeat" description="PPR 6">
    <location>
        <begin position="230"/>
        <end position="260"/>
    </location>
</feature>
<feature type="repeat" description="PPR 7">
    <location>
        <begin position="261"/>
        <end position="295"/>
    </location>
</feature>
<feature type="repeat" description="PPR 8">
    <location>
        <begin position="296"/>
        <end position="330"/>
    </location>
</feature>
<feature type="repeat" description="PPR 9">
    <location>
        <begin position="331"/>
        <end position="365"/>
    </location>
</feature>
<feature type="repeat" description="PPR 10">
    <location>
        <begin position="366"/>
        <end position="396"/>
    </location>
</feature>
<feature type="repeat" description="PPR 11">
    <location>
        <begin position="397"/>
        <end position="431"/>
    </location>
</feature>
<feature type="repeat" description="PPR 12">
    <location>
        <begin position="432"/>
        <end position="466"/>
    </location>
</feature>
<feature type="repeat" description="PPR 13">
    <location>
        <begin position="467"/>
        <end position="493"/>
    </location>
</feature>
<feature type="repeat" description="PPR 14">
    <location>
        <begin position="497"/>
        <end position="531"/>
    </location>
</feature>
<feature type="repeat" description="PPR 15">
    <location>
        <begin position="532"/>
        <end position="561"/>
    </location>
</feature>
<feature type="repeat" description="PPR 16">
    <location>
        <begin position="562"/>
        <end position="596"/>
    </location>
</feature>
<feature type="repeat" description="PPR 17">
    <location>
        <begin position="597"/>
        <end position="631"/>
    </location>
</feature>
<feature type="repeat" description="PPR 18">
    <location>
        <begin position="632"/>
        <end position="662"/>
    </location>
</feature>
<feature type="region of interest" description="Type E motif">
    <location>
        <begin position="667"/>
        <end position="742"/>
    </location>
</feature>
<feature type="region of interest" description="Type E(+) motif">
    <location>
        <begin position="743"/>
        <end position="773"/>
    </location>
</feature>
<feature type="region of interest" description="Type DYW motif">
    <location>
        <begin position="774"/>
        <end position="866"/>
    </location>
</feature>
<feature type="mutagenesis site" description="In ecb2-2; delayed chloroplast development and plant greening." evidence="4">
    <original>T</original>
    <variation>I</variation>
    <location>
        <position position="500"/>
    </location>
</feature>
<protein>
    <recommendedName>
        <fullName>Pentatricopeptide repeat-containing protein At1g15510, chloroplastic</fullName>
    </recommendedName>
    <alternativeName>
        <fullName evidence="5">Protein EARLY CHLOROPLAST BIOGENESIS 2</fullName>
        <shortName evidence="5">AtECB2</shortName>
    </alternativeName>
    <alternativeName>
        <fullName evidence="6">Protein VANILLA CREAM 1</fullName>
    </alternativeName>
</protein>
<sequence>MASSAQSPHFYLNPGKSNSFQSKAYKQRNVNFYWNFGIRRLFLRKSQGLSVLSSSSSSTHFSNSQLHGLCANGKLEEAMKLLNSMQELRVAVDEDVFVALVRLCEWKRAQEEGSKVYSIALSSMSSLGVELGNAFLAMFVRFGNLVDAWYVFGKMSERNLFSWNVLVGGYAKQGYFDEAMCLYHRMLWVGGVKPDVYTFPCVLRTCGGIPDLARGKEVHVHVVRYGYELDIDVVNALITMYVKCGDVKSARLLFDRMPRRDIISWNAMISGYFENGMCHEGLELFFAMRGLSVDPDLMTLTSVISACELLGDRRLGRDIHAYVITTGFAVDISVCNSLTQMYLNAGSWREAEKLFSRMERKDIVSWTTMISGYEYNFLPDKAIDTYRMMDQDSVKPDEITVAAVLSACATLGDLDTGVELHKLAIKARLISYVIVANNLINMYSKCKCIDKALDIFHNIPRKNVISWTSIIAGLRLNNRCFEALIFLRQMKMTLQPNAITLTAALAACARIGALMCGKEIHAHVLRTGVGLDDFLPNALLDMYVRCGRMNTAWSQFNSQKKDVTSWNILLTGYSERGQGSMVVELFDRMVKSRVRPDEITFISLLCGCSKSQMVRQGLMYFSKMEDYGVTPNLKHYACVVDLLGRAGELQEAHKFIQKMPVTPDPAVWGALLNACRIHHKIDLGELSAQHIFELDKKSVGYYILLCNLYADCGKWREVAKVRRMMKENGLTVDAGCSWVEVKGKVHAFLSDDKYHPQTKEINTVLEGFYEKMSEVGLTKISESSSMDETEISRDEIFCGHSERKAIAFGLINTVPGMPIWVTKNLSMCENCHDTVKFISKTVRREISVRDAEHFHHFKDGECSCGD</sequence>
<organism>
    <name type="scientific">Arabidopsis thaliana</name>
    <name type="common">Mouse-ear cress</name>
    <dbReference type="NCBI Taxonomy" id="3702"/>
    <lineage>
        <taxon>Eukaryota</taxon>
        <taxon>Viridiplantae</taxon>
        <taxon>Streptophyta</taxon>
        <taxon>Embryophyta</taxon>
        <taxon>Tracheophyta</taxon>
        <taxon>Spermatophyta</taxon>
        <taxon>Magnoliopsida</taxon>
        <taxon>eudicotyledons</taxon>
        <taxon>Gunneridae</taxon>
        <taxon>Pentapetalae</taxon>
        <taxon>rosids</taxon>
        <taxon>malvids</taxon>
        <taxon>Brassicales</taxon>
        <taxon>Brassicaceae</taxon>
        <taxon>Camelineae</taxon>
        <taxon>Arabidopsis</taxon>
    </lineage>
</organism>
<comment type="function">
    <text evidence="2 3 4">Regulates the RNA editing of the chloroplast transcript accD, and is essential for the early stages of chloroplast biogenesis (PubMed:19500301, PubMed:20143129, PubMed:21294841). Required for the RNA editing of the chloroplast transcript ndhF (PubMed:20143129, PubMed:21294841).</text>
</comment>
<comment type="subcellular location">
    <subcellularLocation>
        <location evidence="7">Plastid</location>
        <location evidence="7">Chloroplast</location>
    </subcellularLocation>
</comment>
<comment type="disruption phenotype">
    <text evidence="2">Albino cotyledons without primary leaf and seedling lethality under autotrophic growth conditions.</text>
</comment>
<comment type="similarity">
    <text evidence="7">Belongs to the PPR family. PCMP-H subfamily.</text>
</comment>
<comment type="online information" name="Pentatricopeptide repeat proteins">
    <link uri="https://ppr.plantenergy.uwa.edu.au"/>
</comment>
<name>PPR45_ARATH</name>
<evidence type="ECO:0000255" key="1"/>
<evidence type="ECO:0000269" key="2">
    <source>
    </source>
</evidence>
<evidence type="ECO:0000269" key="3">
    <source>
    </source>
</evidence>
<evidence type="ECO:0000269" key="4">
    <source>
    </source>
</evidence>
<evidence type="ECO:0000303" key="5">
    <source>
    </source>
</evidence>
<evidence type="ECO:0000303" key="6">
    <source>
    </source>
</evidence>
<evidence type="ECO:0000305" key="7"/>